<proteinExistence type="inferred from homology"/>
<accession>B2HVM2</accession>
<reference key="1">
    <citation type="journal article" date="2008" name="Antimicrob. Agents Chemother.">
        <title>Whole-genome pyrosequencing of an epidemic multidrug-resistant Acinetobacter baumannii strain belonging to the European clone II group.</title>
        <authorList>
            <person name="Iacono M."/>
            <person name="Villa L."/>
            <person name="Fortini D."/>
            <person name="Bordoni R."/>
            <person name="Imperi F."/>
            <person name="Bonnal R.J."/>
            <person name="Sicheritz-Ponten T."/>
            <person name="De Bellis G."/>
            <person name="Visca P."/>
            <person name="Cassone A."/>
            <person name="Carattoli A."/>
        </authorList>
    </citation>
    <scope>NUCLEOTIDE SEQUENCE [LARGE SCALE GENOMIC DNA]</scope>
    <source>
        <strain>ACICU</strain>
    </source>
</reference>
<name>RL31_ACIBC</name>
<comment type="function">
    <text evidence="1">Binds the 23S rRNA.</text>
</comment>
<comment type="cofactor">
    <cofactor evidence="1">
        <name>Zn(2+)</name>
        <dbReference type="ChEBI" id="CHEBI:29105"/>
    </cofactor>
    <text evidence="1">Binds 1 zinc ion per subunit.</text>
</comment>
<comment type="subunit">
    <text evidence="1">Part of the 50S ribosomal subunit.</text>
</comment>
<comment type="similarity">
    <text evidence="1">Belongs to the bacterial ribosomal protein bL31 family. Type A subfamily.</text>
</comment>
<organism>
    <name type="scientific">Acinetobacter baumannii (strain ACICU)</name>
    <dbReference type="NCBI Taxonomy" id="405416"/>
    <lineage>
        <taxon>Bacteria</taxon>
        <taxon>Pseudomonadati</taxon>
        <taxon>Pseudomonadota</taxon>
        <taxon>Gammaproteobacteria</taxon>
        <taxon>Moraxellales</taxon>
        <taxon>Moraxellaceae</taxon>
        <taxon>Acinetobacter</taxon>
        <taxon>Acinetobacter calcoaceticus/baumannii complex</taxon>
    </lineage>
</organism>
<sequence>MRADIHPKYEKLVATCSCGNVIETRSALGKETIYLDVCSACHPFYTGKQKNVDTGGRIDKFKQRFAGMSRSIKR</sequence>
<keyword id="KW-0479">Metal-binding</keyword>
<keyword id="KW-0687">Ribonucleoprotein</keyword>
<keyword id="KW-0689">Ribosomal protein</keyword>
<keyword id="KW-0694">RNA-binding</keyword>
<keyword id="KW-0699">rRNA-binding</keyword>
<keyword id="KW-0862">Zinc</keyword>
<evidence type="ECO:0000255" key="1">
    <source>
        <dbReference type="HAMAP-Rule" id="MF_00501"/>
    </source>
</evidence>
<evidence type="ECO:0000305" key="2"/>
<protein>
    <recommendedName>
        <fullName evidence="1">Large ribosomal subunit protein bL31</fullName>
    </recommendedName>
    <alternativeName>
        <fullName evidence="2">50S ribosomal protein L31</fullName>
    </alternativeName>
</protein>
<gene>
    <name evidence="1" type="primary">rpmE</name>
    <name type="ordered locus">ACICU_02632</name>
</gene>
<dbReference type="EMBL" id="CP000863">
    <property type="protein sequence ID" value="ACC57944.1"/>
    <property type="molecule type" value="Genomic_DNA"/>
</dbReference>
<dbReference type="RefSeq" id="WP_001200845.1">
    <property type="nucleotide sequence ID" value="NZ_CP031380.1"/>
</dbReference>
<dbReference type="SMR" id="B2HVM2"/>
<dbReference type="GeneID" id="92894731"/>
<dbReference type="KEGG" id="abc:ACICU_02632"/>
<dbReference type="HOGENOM" id="CLU_114306_4_3_6"/>
<dbReference type="Proteomes" id="UP000008839">
    <property type="component" value="Chromosome"/>
</dbReference>
<dbReference type="GO" id="GO:1990904">
    <property type="term" value="C:ribonucleoprotein complex"/>
    <property type="evidence" value="ECO:0007669"/>
    <property type="project" value="UniProtKB-KW"/>
</dbReference>
<dbReference type="GO" id="GO:0005840">
    <property type="term" value="C:ribosome"/>
    <property type="evidence" value="ECO:0007669"/>
    <property type="project" value="UniProtKB-KW"/>
</dbReference>
<dbReference type="GO" id="GO:0046872">
    <property type="term" value="F:metal ion binding"/>
    <property type="evidence" value="ECO:0007669"/>
    <property type="project" value="UniProtKB-KW"/>
</dbReference>
<dbReference type="GO" id="GO:0019843">
    <property type="term" value="F:rRNA binding"/>
    <property type="evidence" value="ECO:0007669"/>
    <property type="project" value="UniProtKB-KW"/>
</dbReference>
<dbReference type="GO" id="GO:0003735">
    <property type="term" value="F:structural constituent of ribosome"/>
    <property type="evidence" value="ECO:0007669"/>
    <property type="project" value="InterPro"/>
</dbReference>
<dbReference type="GO" id="GO:0006412">
    <property type="term" value="P:translation"/>
    <property type="evidence" value="ECO:0007669"/>
    <property type="project" value="UniProtKB-UniRule"/>
</dbReference>
<dbReference type="Gene3D" id="4.10.830.30">
    <property type="entry name" value="Ribosomal protein L31"/>
    <property type="match status" value="1"/>
</dbReference>
<dbReference type="HAMAP" id="MF_00501">
    <property type="entry name" value="Ribosomal_bL31_1"/>
    <property type="match status" value="1"/>
</dbReference>
<dbReference type="InterPro" id="IPR034704">
    <property type="entry name" value="Ribosomal_bL28/bL31-like_sf"/>
</dbReference>
<dbReference type="InterPro" id="IPR002150">
    <property type="entry name" value="Ribosomal_bL31"/>
</dbReference>
<dbReference type="InterPro" id="IPR027491">
    <property type="entry name" value="Ribosomal_bL31_A"/>
</dbReference>
<dbReference type="InterPro" id="IPR042105">
    <property type="entry name" value="Ribosomal_bL31_sf"/>
</dbReference>
<dbReference type="NCBIfam" id="TIGR00105">
    <property type="entry name" value="L31"/>
    <property type="match status" value="1"/>
</dbReference>
<dbReference type="NCBIfam" id="NF000612">
    <property type="entry name" value="PRK00019.1"/>
    <property type="match status" value="1"/>
</dbReference>
<dbReference type="NCBIfam" id="NF001809">
    <property type="entry name" value="PRK00528.1"/>
    <property type="match status" value="1"/>
</dbReference>
<dbReference type="PANTHER" id="PTHR33280">
    <property type="entry name" value="50S RIBOSOMAL PROTEIN L31, CHLOROPLASTIC"/>
    <property type="match status" value="1"/>
</dbReference>
<dbReference type="PANTHER" id="PTHR33280:SF6">
    <property type="entry name" value="LARGE RIBOSOMAL SUBUNIT PROTEIN BL31A"/>
    <property type="match status" value="1"/>
</dbReference>
<dbReference type="Pfam" id="PF01197">
    <property type="entry name" value="Ribosomal_L31"/>
    <property type="match status" value="1"/>
</dbReference>
<dbReference type="PRINTS" id="PR01249">
    <property type="entry name" value="RIBOSOMALL31"/>
</dbReference>
<dbReference type="SUPFAM" id="SSF143800">
    <property type="entry name" value="L28p-like"/>
    <property type="match status" value="1"/>
</dbReference>
<dbReference type="PROSITE" id="PS01143">
    <property type="entry name" value="RIBOSOMAL_L31"/>
    <property type="match status" value="1"/>
</dbReference>
<feature type="chain" id="PRO_1000126543" description="Large ribosomal subunit protein bL31">
    <location>
        <begin position="1"/>
        <end position="74"/>
    </location>
</feature>
<feature type="binding site" evidence="1">
    <location>
        <position position="16"/>
    </location>
    <ligand>
        <name>Zn(2+)</name>
        <dbReference type="ChEBI" id="CHEBI:29105"/>
    </ligand>
</feature>
<feature type="binding site" evidence="1">
    <location>
        <position position="18"/>
    </location>
    <ligand>
        <name>Zn(2+)</name>
        <dbReference type="ChEBI" id="CHEBI:29105"/>
    </ligand>
</feature>
<feature type="binding site" evidence="1">
    <location>
        <position position="38"/>
    </location>
    <ligand>
        <name>Zn(2+)</name>
        <dbReference type="ChEBI" id="CHEBI:29105"/>
    </ligand>
</feature>
<feature type="binding site" evidence="1">
    <location>
        <position position="41"/>
    </location>
    <ligand>
        <name>Zn(2+)</name>
        <dbReference type="ChEBI" id="CHEBI:29105"/>
    </ligand>
</feature>